<reference key="1">
    <citation type="submission" date="2008-05" db="EMBL/GenBank/DDBJ databases">
        <title>Complete sequence of Shigella boydii serotype 18 strain BS512.</title>
        <authorList>
            <person name="Rasko D.A."/>
            <person name="Rosovitz M."/>
            <person name="Maurelli A.T."/>
            <person name="Myers G."/>
            <person name="Seshadri R."/>
            <person name="Cer R."/>
            <person name="Jiang L."/>
            <person name="Ravel J."/>
            <person name="Sebastian Y."/>
        </authorList>
    </citation>
    <scope>NUCLEOTIDE SEQUENCE [LARGE SCALE GENOMIC DNA]</scope>
    <source>
        <strain>CDC 3083-94 / BS512</strain>
    </source>
</reference>
<protein>
    <recommendedName>
        <fullName evidence="1">Phosphopantetheine adenylyltransferase</fullName>
        <ecNumber evidence="1">2.7.7.3</ecNumber>
    </recommendedName>
    <alternativeName>
        <fullName evidence="1">Dephospho-CoA pyrophosphorylase</fullName>
    </alternativeName>
    <alternativeName>
        <fullName evidence="1">Pantetheine-phosphate adenylyltransferase</fullName>
        <shortName evidence="1">PPAT</shortName>
    </alternativeName>
</protein>
<sequence>MQKRAIYPGTFDPITNGHIDIVTRATQMFDHVILAIAASPSKKPMFTLEERVALAQQATAHLGNVEVVGFSDLMANFARNQHATVLIRGLRAVADFEYEMQLAHMNRHLMPELESVFLMPSKEWSFISSSLVKEVARHQGDVTHFLPENVHQALMAKLA</sequence>
<comment type="function">
    <text evidence="1">Reversibly transfers an adenylyl group from ATP to 4'-phosphopantetheine, yielding dephospho-CoA (dPCoA) and pyrophosphate.</text>
</comment>
<comment type="catalytic activity">
    <reaction evidence="1">
        <text>(R)-4'-phosphopantetheine + ATP + H(+) = 3'-dephospho-CoA + diphosphate</text>
        <dbReference type="Rhea" id="RHEA:19801"/>
        <dbReference type="ChEBI" id="CHEBI:15378"/>
        <dbReference type="ChEBI" id="CHEBI:30616"/>
        <dbReference type="ChEBI" id="CHEBI:33019"/>
        <dbReference type="ChEBI" id="CHEBI:57328"/>
        <dbReference type="ChEBI" id="CHEBI:61723"/>
        <dbReference type="EC" id="2.7.7.3"/>
    </reaction>
</comment>
<comment type="cofactor">
    <cofactor evidence="1">
        <name>Mg(2+)</name>
        <dbReference type="ChEBI" id="CHEBI:18420"/>
    </cofactor>
</comment>
<comment type="pathway">
    <text evidence="1">Cofactor biosynthesis; coenzyme A biosynthesis; CoA from (R)-pantothenate: step 4/5.</text>
</comment>
<comment type="subunit">
    <text evidence="1">Homohexamer.</text>
</comment>
<comment type="subcellular location">
    <subcellularLocation>
        <location evidence="1">Cytoplasm</location>
    </subcellularLocation>
</comment>
<comment type="similarity">
    <text evidence="1">Belongs to the bacterial CoaD family.</text>
</comment>
<feature type="chain" id="PRO_1000096841" description="Phosphopantetheine adenylyltransferase">
    <location>
        <begin position="1"/>
        <end position="159"/>
    </location>
</feature>
<feature type="binding site" evidence="1">
    <location>
        <begin position="10"/>
        <end position="11"/>
    </location>
    <ligand>
        <name>ATP</name>
        <dbReference type="ChEBI" id="CHEBI:30616"/>
    </ligand>
</feature>
<feature type="binding site" evidence="1">
    <location>
        <position position="10"/>
    </location>
    <ligand>
        <name>substrate</name>
    </ligand>
</feature>
<feature type="binding site" evidence="1">
    <location>
        <position position="18"/>
    </location>
    <ligand>
        <name>ATP</name>
        <dbReference type="ChEBI" id="CHEBI:30616"/>
    </ligand>
</feature>
<feature type="binding site" evidence="1">
    <location>
        <position position="42"/>
    </location>
    <ligand>
        <name>substrate</name>
    </ligand>
</feature>
<feature type="binding site" evidence="1">
    <location>
        <position position="74"/>
    </location>
    <ligand>
        <name>substrate</name>
    </ligand>
</feature>
<feature type="binding site" evidence="1">
    <location>
        <position position="88"/>
    </location>
    <ligand>
        <name>substrate</name>
    </ligand>
</feature>
<feature type="binding site" evidence="1">
    <location>
        <begin position="89"/>
        <end position="91"/>
    </location>
    <ligand>
        <name>ATP</name>
        <dbReference type="ChEBI" id="CHEBI:30616"/>
    </ligand>
</feature>
<feature type="binding site" evidence="1">
    <location>
        <position position="99"/>
    </location>
    <ligand>
        <name>ATP</name>
        <dbReference type="ChEBI" id="CHEBI:30616"/>
    </ligand>
</feature>
<feature type="binding site" evidence="1">
    <location>
        <begin position="124"/>
        <end position="130"/>
    </location>
    <ligand>
        <name>ATP</name>
        <dbReference type="ChEBI" id="CHEBI:30616"/>
    </ligand>
</feature>
<feature type="site" description="Transition state stabilizer" evidence="1">
    <location>
        <position position="18"/>
    </location>
</feature>
<evidence type="ECO:0000255" key="1">
    <source>
        <dbReference type="HAMAP-Rule" id="MF_00151"/>
    </source>
</evidence>
<gene>
    <name evidence="1" type="primary">coaD</name>
    <name type="ordered locus">SbBS512_E4059</name>
</gene>
<keyword id="KW-0067">ATP-binding</keyword>
<keyword id="KW-0173">Coenzyme A biosynthesis</keyword>
<keyword id="KW-0963">Cytoplasm</keyword>
<keyword id="KW-0460">Magnesium</keyword>
<keyword id="KW-0547">Nucleotide-binding</keyword>
<keyword id="KW-0548">Nucleotidyltransferase</keyword>
<keyword id="KW-1185">Reference proteome</keyword>
<keyword id="KW-0808">Transferase</keyword>
<name>COAD_SHIB3</name>
<proteinExistence type="inferred from homology"/>
<dbReference type="EC" id="2.7.7.3" evidence="1"/>
<dbReference type="EMBL" id="CP001063">
    <property type="protein sequence ID" value="ACD06400.1"/>
    <property type="molecule type" value="Genomic_DNA"/>
</dbReference>
<dbReference type="RefSeq" id="WP_001171866.1">
    <property type="nucleotide sequence ID" value="NC_010658.1"/>
</dbReference>
<dbReference type="SMR" id="B2TTU8"/>
<dbReference type="STRING" id="344609.SbBS512_E4059"/>
<dbReference type="GeneID" id="75202203"/>
<dbReference type="KEGG" id="sbc:SbBS512_E4059"/>
<dbReference type="HOGENOM" id="CLU_100149_0_1_6"/>
<dbReference type="UniPathway" id="UPA00241">
    <property type="reaction ID" value="UER00355"/>
</dbReference>
<dbReference type="Proteomes" id="UP000001030">
    <property type="component" value="Chromosome"/>
</dbReference>
<dbReference type="GO" id="GO:0005737">
    <property type="term" value="C:cytoplasm"/>
    <property type="evidence" value="ECO:0007669"/>
    <property type="project" value="UniProtKB-SubCell"/>
</dbReference>
<dbReference type="GO" id="GO:0005524">
    <property type="term" value="F:ATP binding"/>
    <property type="evidence" value="ECO:0007669"/>
    <property type="project" value="UniProtKB-KW"/>
</dbReference>
<dbReference type="GO" id="GO:0004595">
    <property type="term" value="F:pantetheine-phosphate adenylyltransferase activity"/>
    <property type="evidence" value="ECO:0007669"/>
    <property type="project" value="UniProtKB-UniRule"/>
</dbReference>
<dbReference type="GO" id="GO:0015937">
    <property type="term" value="P:coenzyme A biosynthetic process"/>
    <property type="evidence" value="ECO:0007669"/>
    <property type="project" value="UniProtKB-UniRule"/>
</dbReference>
<dbReference type="CDD" id="cd02163">
    <property type="entry name" value="PPAT"/>
    <property type="match status" value="1"/>
</dbReference>
<dbReference type="FunFam" id="3.40.50.620:FF:000012">
    <property type="entry name" value="Phosphopantetheine adenylyltransferase"/>
    <property type="match status" value="1"/>
</dbReference>
<dbReference type="Gene3D" id="3.40.50.620">
    <property type="entry name" value="HUPs"/>
    <property type="match status" value="1"/>
</dbReference>
<dbReference type="HAMAP" id="MF_00151">
    <property type="entry name" value="PPAT_bact"/>
    <property type="match status" value="1"/>
</dbReference>
<dbReference type="InterPro" id="IPR004821">
    <property type="entry name" value="Cyt_trans-like"/>
</dbReference>
<dbReference type="InterPro" id="IPR001980">
    <property type="entry name" value="PPAT"/>
</dbReference>
<dbReference type="InterPro" id="IPR014729">
    <property type="entry name" value="Rossmann-like_a/b/a_fold"/>
</dbReference>
<dbReference type="NCBIfam" id="TIGR01510">
    <property type="entry name" value="coaD_prev_kdtB"/>
    <property type="match status" value="1"/>
</dbReference>
<dbReference type="NCBIfam" id="TIGR00125">
    <property type="entry name" value="cyt_tran_rel"/>
    <property type="match status" value="1"/>
</dbReference>
<dbReference type="PANTHER" id="PTHR21342">
    <property type="entry name" value="PHOSPHOPANTETHEINE ADENYLYLTRANSFERASE"/>
    <property type="match status" value="1"/>
</dbReference>
<dbReference type="PANTHER" id="PTHR21342:SF1">
    <property type="entry name" value="PHOSPHOPANTETHEINE ADENYLYLTRANSFERASE"/>
    <property type="match status" value="1"/>
</dbReference>
<dbReference type="Pfam" id="PF01467">
    <property type="entry name" value="CTP_transf_like"/>
    <property type="match status" value="1"/>
</dbReference>
<dbReference type="PRINTS" id="PR01020">
    <property type="entry name" value="LPSBIOSNTHSS"/>
</dbReference>
<dbReference type="SUPFAM" id="SSF52374">
    <property type="entry name" value="Nucleotidylyl transferase"/>
    <property type="match status" value="1"/>
</dbReference>
<organism>
    <name type="scientific">Shigella boydii serotype 18 (strain CDC 3083-94 / BS512)</name>
    <dbReference type="NCBI Taxonomy" id="344609"/>
    <lineage>
        <taxon>Bacteria</taxon>
        <taxon>Pseudomonadati</taxon>
        <taxon>Pseudomonadota</taxon>
        <taxon>Gammaproteobacteria</taxon>
        <taxon>Enterobacterales</taxon>
        <taxon>Enterobacteriaceae</taxon>
        <taxon>Shigella</taxon>
    </lineage>
</organism>
<accession>B2TTU8</accession>